<gene>
    <name type="primary">hssS</name>
    <name type="ordered locus">USA300HOU_2345</name>
</gene>
<protein>
    <recommendedName>
        <fullName>Heme sensor protein HssS</fullName>
        <ecNumber>2.7.13.3</ecNumber>
    </recommendedName>
</protein>
<comment type="function">
    <text evidence="1">Member of the two-component regulatory system HssS/HssR involved in intracellular heme homeostasis and tempering of staphylococcal virulence. HssS functions as a heme sensor histidine kinase which is autophosphorylated at a histidine residue and transfers its phosphate group to an aspartate residue of HssR. HssR/HssS activates the expression of hrtAB, an efflux pump, in response to extracellular heme, hemin, hemoglobin or blood (By similarity).</text>
</comment>
<comment type="catalytic activity">
    <reaction>
        <text>ATP + protein L-histidine = ADP + protein N-phospho-L-histidine.</text>
        <dbReference type="EC" id="2.7.13.3"/>
    </reaction>
</comment>
<comment type="subcellular location">
    <subcellularLocation>
        <location evidence="1">Cell membrane</location>
        <topology evidence="1">Multi-pass membrane protein</topology>
    </subcellularLocation>
</comment>
<comment type="PTM">
    <text evidence="1">Autophosphorylated.</text>
</comment>
<sequence>MFKTLYARIAIYSITVILFSALISFVLTNVYYHYNLKASNDAKIMKTLKEARQYEQSAKPTHIQQYFKHLGQMNYQIMTIDQKGHKTFYGEPFREDTLSQNAINNVLNNQDYHGIKDKPFALFVTGFFDNVTDNTVGINFKTKDGSIAVFMRPDIGETFSEFRTFLAVLLMLLLFISISLVIASTYSIIRPVKKLKLATERLIDGDFETPIKQTRKDEIGTLQYHFNKMRESLGQVDQMRQHFVQNVSHEIKTPLTHIHHLLSELQQTSDKTLRQQYINDIYTITTQLSGLTTELLLLSELDNHQHLLFDDKIQVNQLIKDIIRHEQFAADEKSLIILADLESINFLGNQRLLHQALSNLLINAIKYTDVGGAIDIALQHSHNNIIFTISNDGSPISPQAEARLFERFYKVSKHDNSNGLGLAITKSIIELHHGTIQFTQSNEYVTTFTITLPNNSL</sequence>
<name>HSSS_STAAT</name>
<dbReference type="EC" id="2.7.13.3"/>
<dbReference type="EMBL" id="CP000730">
    <property type="protein sequence ID" value="ABX30336.1"/>
    <property type="molecule type" value="Genomic_DNA"/>
</dbReference>
<dbReference type="RefSeq" id="WP_000477329.1">
    <property type="nucleotide sequence ID" value="NC_010079.1"/>
</dbReference>
<dbReference type="SMR" id="A8Z553"/>
<dbReference type="KEGG" id="sax:USA300HOU_2345"/>
<dbReference type="HOGENOM" id="CLU_000445_89_6_9"/>
<dbReference type="GO" id="GO:0005886">
    <property type="term" value="C:plasma membrane"/>
    <property type="evidence" value="ECO:0007669"/>
    <property type="project" value="UniProtKB-SubCell"/>
</dbReference>
<dbReference type="GO" id="GO:0005524">
    <property type="term" value="F:ATP binding"/>
    <property type="evidence" value="ECO:0007669"/>
    <property type="project" value="UniProtKB-KW"/>
</dbReference>
<dbReference type="GO" id="GO:0000155">
    <property type="term" value="F:phosphorelay sensor kinase activity"/>
    <property type="evidence" value="ECO:0007669"/>
    <property type="project" value="InterPro"/>
</dbReference>
<dbReference type="CDD" id="cd06225">
    <property type="entry name" value="HAMP"/>
    <property type="match status" value="1"/>
</dbReference>
<dbReference type="CDD" id="cd00082">
    <property type="entry name" value="HisKA"/>
    <property type="match status" value="1"/>
</dbReference>
<dbReference type="FunFam" id="3.30.565.10:FF:000006">
    <property type="entry name" value="Sensor histidine kinase WalK"/>
    <property type="match status" value="1"/>
</dbReference>
<dbReference type="Gene3D" id="1.10.287.130">
    <property type="match status" value="1"/>
</dbReference>
<dbReference type="Gene3D" id="6.10.340.10">
    <property type="match status" value="1"/>
</dbReference>
<dbReference type="Gene3D" id="3.30.565.10">
    <property type="entry name" value="Histidine kinase-like ATPase, C-terminal domain"/>
    <property type="match status" value="1"/>
</dbReference>
<dbReference type="InterPro" id="IPR050398">
    <property type="entry name" value="Bact_Sensor_His_Kinase"/>
</dbReference>
<dbReference type="InterPro" id="IPR003660">
    <property type="entry name" value="HAMP_dom"/>
</dbReference>
<dbReference type="InterPro" id="IPR036890">
    <property type="entry name" value="HATPase_C_sf"/>
</dbReference>
<dbReference type="InterPro" id="IPR005467">
    <property type="entry name" value="His_kinase_dom"/>
</dbReference>
<dbReference type="InterPro" id="IPR003661">
    <property type="entry name" value="HisK_dim/P_dom"/>
</dbReference>
<dbReference type="InterPro" id="IPR036097">
    <property type="entry name" value="HisK_dim/P_sf"/>
</dbReference>
<dbReference type="InterPro" id="IPR004358">
    <property type="entry name" value="Sig_transdc_His_kin-like_C"/>
</dbReference>
<dbReference type="PANTHER" id="PTHR45528:SF11">
    <property type="entry name" value="HISTIDINE KINASE"/>
    <property type="match status" value="1"/>
</dbReference>
<dbReference type="PANTHER" id="PTHR45528">
    <property type="entry name" value="SENSOR HISTIDINE KINASE CPXA"/>
    <property type="match status" value="1"/>
</dbReference>
<dbReference type="Pfam" id="PF00672">
    <property type="entry name" value="HAMP"/>
    <property type="match status" value="1"/>
</dbReference>
<dbReference type="Pfam" id="PF02518">
    <property type="entry name" value="HATPase_c"/>
    <property type="match status" value="1"/>
</dbReference>
<dbReference type="Pfam" id="PF00512">
    <property type="entry name" value="HisKA"/>
    <property type="match status" value="1"/>
</dbReference>
<dbReference type="PRINTS" id="PR00344">
    <property type="entry name" value="BCTRLSENSOR"/>
</dbReference>
<dbReference type="SMART" id="SM00304">
    <property type="entry name" value="HAMP"/>
    <property type="match status" value="1"/>
</dbReference>
<dbReference type="SMART" id="SM00387">
    <property type="entry name" value="HATPase_c"/>
    <property type="match status" value="1"/>
</dbReference>
<dbReference type="SMART" id="SM00388">
    <property type="entry name" value="HisKA"/>
    <property type="match status" value="1"/>
</dbReference>
<dbReference type="SUPFAM" id="SSF55874">
    <property type="entry name" value="ATPase domain of HSP90 chaperone/DNA topoisomerase II/histidine kinase"/>
    <property type="match status" value="1"/>
</dbReference>
<dbReference type="SUPFAM" id="SSF158472">
    <property type="entry name" value="HAMP domain-like"/>
    <property type="match status" value="1"/>
</dbReference>
<dbReference type="SUPFAM" id="SSF47384">
    <property type="entry name" value="Homodimeric domain of signal transducing histidine kinase"/>
    <property type="match status" value="1"/>
</dbReference>
<dbReference type="PROSITE" id="PS50885">
    <property type="entry name" value="HAMP"/>
    <property type="match status" value="1"/>
</dbReference>
<dbReference type="PROSITE" id="PS50109">
    <property type="entry name" value="HIS_KIN"/>
    <property type="match status" value="1"/>
</dbReference>
<proteinExistence type="inferred from homology"/>
<reference key="1">
    <citation type="journal article" date="2007" name="BMC Microbiol.">
        <title>Subtle genetic changes enhance virulence of methicillin resistant and sensitive Staphylococcus aureus.</title>
        <authorList>
            <person name="Highlander S.K."/>
            <person name="Hulten K.G."/>
            <person name="Qin X."/>
            <person name="Jiang H."/>
            <person name="Yerrapragada S."/>
            <person name="Mason E.O. Jr."/>
            <person name="Shang Y."/>
            <person name="Williams T.M."/>
            <person name="Fortunov R.M."/>
            <person name="Liu Y."/>
            <person name="Igboeli O."/>
            <person name="Petrosino J."/>
            <person name="Tirumalai M."/>
            <person name="Uzman A."/>
            <person name="Fox G.E."/>
            <person name="Cardenas A.M."/>
            <person name="Muzny D.M."/>
            <person name="Hemphill L."/>
            <person name="Ding Y."/>
            <person name="Dugan S."/>
            <person name="Blyth P.R."/>
            <person name="Buhay C.J."/>
            <person name="Dinh H.H."/>
            <person name="Hawes A.C."/>
            <person name="Holder M."/>
            <person name="Kovar C.L."/>
            <person name="Lee S.L."/>
            <person name="Liu W."/>
            <person name="Nazareth L.V."/>
            <person name="Wang Q."/>
            <person name="Zhou J."/>
            <person name="Kaplan S.L."/>
            <person name="Weinstock G.M."/>
        </authorList>
    </citation>
    <scope>NUCLEOTIDE SEQUENCE [LARGE SCALE GENOMIC DNA]</scope>
    <source>
        <strain>USA300 / TCH1516</strain>
    </source>
</reference>
<accession>A8Z553</accession>
<feature type="chain" id="PRO_0000331349" description="Heme sensor protein HssS">
    <location>
        <begin position="1"/>
        <end position="457"/>
    </location>
</feature>
<feature type="transmembrane region" description="Helical" evidence="2">
    <location>
        <begin position="9"/>
        <end position="29"/>
    </location>
</feature>
<feature type="transmembrane region" description="Helical" evidence="2">
    <location>
        <begin position="164"/>
        <end position="184"/>
    </location>
</feature>
<feature type="domain" description="HAMP" evidence="3">
    <location>
        <begin position="186"/>
        <end position="238"/>
    </location>
</feature>
<feature type="domain" description="Histidine kinase" evidence="4">
    <location>
        <begin position="246"/>
        <end position="456"/>
    </location>
</feature>
<feature type="modified residue" description="Phosphohistidine; by autocatalysis" evidence="4">
    <location>
        <position position="249"/>
    </location>
</feature>
<evidence type="ECO:0000250" key="1"/>
<evidence type="ECO:0000255" key="2"/>
<evidence type="ECO:0000255" key="3">
    <source>
        <dbReference type="PROSITE-ProRule" id="PRU00102"/>
    </source>
</evidence>
<evidence type="ECO:0000255" key="4">
    <source>
        <dbReference type="PROSITE-ProRule" id="PRU00107"/>
    </source>
</evidence>
<keyword id="KW-0067">ATP-binding</keyword>
<keyword id="KW-1003">Cell membrane</keyword>
<keyword id="KW-0418">Kinase</keyword>
<keyword id="KW-0472">Membrane</keyword>
<keyword id="KW-0547">Nucleotide-binding</keyword>
<keyword id="KW-0597">Phosphoprotein</keyword>
<keyword id="KW-0808">Transferase</keyword>
<keyword id="KW-0812">Transmembrane</keyword>
<keyword id="KW-1133">Transmembrane helix</keyword>
<keyword id="KW-0902">Two-component regulatory system</keyword>
<keyword id="KW-0843">Virulence</keyword>
<organism>
    <name type="scientific">Staphylococcus aureus (strain USA300 / TCH1516)</name>
    <dbReference type="NCBI Taxonomy" id="451516"/>
    <lineage>
        <taxon>Bacteria</taxon>
        <taxon>Bacillati</taxon>
        <taxon>Bacillota</taxon>
        <taxon>Bacilli</taxon>
        <taxon>Bacillales</taxon>
        <taxon>Staphylococcaceae</taxon>
        <taxon>Staphylococcus</taxon>
    </lineage>
</organism>